<gene>
    <name type="ordered locus">MGAS10270_Spy1030</name>
</gene>
<reference key="1">
    <citation type="journal article" date="2006" name="Proc. Natl. Acad. Sci. U.S.A.">
        <title>Molecular genetic anatomy of inter- and intraserotype variation in the human bacterial pathogen group A Streptococcus.</title>
        <authorList>
            <person name="Beres S.B."/>
            <person name="Richter E.W."/>
            <person name="Nagiec M.J."/>
            <person name="Sumby P."/>
            <person name="Porcella S.F."/>
            <person name="DeLeo F.R."/>
            <person name="Musser J.M."/>
        </authorList>
    </citation>
    <scope>NUCLEOTIDE SEQUENCE [LARGE SCALE GENOMIC DNA]</scope>
    <source>
        <strain>MGAS10270</strain>
    </source>
</reference>
<proteinExistence type="inferred from homology"/>
<sequence>MNIMEIEKTNRMNALFEFYAALLTDKQMNYIELYYADDYSLAEIADEFGVSRQAVYDNIKRTEKILETYEMKLHMYSDYVVRSEIFDDMIAHYPHDEYLQEKISILTSIDNRE</sequence>
<name>Y1030_STRPD</name>
<protein>
    <recommendedName>
        <fullName evidence="1">UPF0122 protein MGAS10270_Spy1030</fullName>
    </recommendedName>
</protein>
<evidence type="ECO:0000255" key="1">
    <source>
        <dbReference type="HAMAP-Rule" id="MF_00245"/>
    </source>
</evidence>
<feature type="chain" id="PRO_1000012546" description="UPF0122 protein MGAS10270_Spy1030">
    <location>
        <begin position="1"/>
        <end position="113"/>
    </location>
</feature>
<dbReference type="EMBL" id="CP000260">
    <property type="protein sequence ID" value="ABF34095.1"/>
    <property type="molecule type" value="Genomic_DNA"/>
</dbReference>
<dbReference type="SMR" id="Q1JGP9"/>
<dbReference type="KEGG" id="sph:MGAS10270_Spy1030"/>
<dbReference type="HOGENOM" id="CLU_129218_1_1_9"/>
<dbReference type="Proteomes" id="UP000002436">
    <property type="component" value="Chromosome"/>
</dbReference>
<dbReference type="Gene3D" id="1.10.10.10">
    <property type="entry name" value="Winged helix-like DNA-binding domain superfamily/Winged helix DNA-binding domain"/>
    <property type="match status" value="1"/>
</dbReference>
<dbReference type="HAMAP" id="MF_00245">
    <property type="entry name" value="UPF0122"/>
    <property type="match status" value="1"/>
</dbReference>
<dbReference type="InterPro" id="IPR013324">
    <property type="entry name" value="RNA_pol_sigma_r3/r4-like"/>
</dbReference>
<dbReference type="InterPro" id="IPR007394">
    <property type="entry name" value="UPF0122"/>
</dbReference>
<dbReference type="InterPro" id="IPR054831">
    <property type="entry name" value="UPF0122_fam_protein"/>
</dbReference>
<dbReference type="InterPro" id="IPR036388">
    <property type="entry name" value="WH-like_DNA-bd_sf"/>
</dbReference>
<dbReference type="NCBIfam" id="NF001066">
    <property type="entry name" value="PRK00118.1-1"/>
    <property type="match status" value="1"/>
</dbReference>
<dbReference type="NCBIfam" id="NF001068">
    <property type="entry name" value="PRK00118.1-4"/>
    <property type="match status" value="1"/>
</dbReference>
<dbReference type="NCBIfam" id="NF001070">
    <property type="entry name" value="PRK00118.1-6"/>
    <property type="match status" value="1"/>
</dbReference>
<dbReference type="NCBIfam" id="NF045758">
    <property type="entry name" value="YlxM"/>
    <property type="match status" value="1"/>
</dbReference>
<dbReference type="PANTHER" id="PTHR40083">
    <property type="entry name" value="UPF0122 PROTEIN CBO2450/CLC_2298"/>
    <property type="match status" value="1"/>
</dbReference>
<dbReference type="PANTHER" id="PTHR40083:SF1">
    <property type="entry name" value="UPF0122 PROTEIN YLXM"/>
    <property type="match status" value="1"/>
</dbReference>
<dbReference type="Pfam" id="PF04297">
    <property type="entry name" value="UPF0122"/>
    <property type="match status" value="1"/>
</dbReference>
<dbReference type="SUPFAM" id="SSF88659">
    <property type="entry name" value="Sigma3 and sigma4 domains of RNA polymerase sigma factors"/>
    <property type="match status" value="1"/>
</dbReference>
<accession>Q1JGP9</accession>
<comment type="function">
    <text evidence="1">Might take part in the signal recognition particle (SRP) pathway. This is inferred from the conservation of its genetic proximity to ftsY/ffh. May be a regulatory protein.</text>
</comment>
<comment type="similarity">
    <text evidence="1">Belongs to the UPF0122 family.</text>
</comment>
<organism>
    <name type="scientific">Streptococcus pyogenes serotype M2 (strain MGAS10270)</name>
    <dbReference type="NCBI Taxonomy" id="370552"/>
    <lineage>
        <taxon>Bacteria</taxon>
        <taxon>Bacillati</taxon>
        <taxon>Bacillota</taxon>
        <taxon>Bacilli</taxon>
        <taxon>Lactobacillales</taxon>
        <taxon>Streptococcaceae</taxon>
        <taxon>Streptococcus</taxon>
    </lineage>
</organism>